<protein>
    <recommendedName>
        <fullName evidence="1">Gamma-glutamyl phosphate reductase</fullName>
        <shortName evidence="1">GPR</shortName>
        <ecNumber evidence="1">1.2.1.41</ecNumber>
    </recommendedName>
    <alternativeName>
        <fullName evidence="1">Glutamate-5-semialdehyde dehydrogenase</fullName>
    </alternativeName>
    <alternativeName>
        <fullName evidence="1">Glutamyl-gamma-semialdehyde dehydrogenase</fullName>
        <shortName evidence="1">GSA dehydrogenase</shortName>
    </alternativeName>
</protein>
<gene>
    <name evidence="1" type="primary">proA</name>
    <name type="ordered locus">BAV2495</name>
</gene>
<proteinExistence type="inferred from homology"/>
<feature type="chain" id="PRO_0000252564" description="Gamma-glutamyl phosphate reductase">
    <location>
        <begin position="1"/>
        <end position="419"/>
    </location>
</feature>
<comment type="function">
    <text evidence="1">Catalyzes the NADPH-dependent reduction of L-glutamate 5-phosphate into L-glutamate 5-semialdehyde and phosphate. The product spontaneously undergoes cyclization to form 1-pyrroline-5-carboxylate.</text>
</comment>
<comment type="catalytic activity">
    <reaction evidence="1">
        <text>L-glutamate 5-semialdehyde + phosphate + NADP(+) = L-glutamyl 5-phosphate + NADPH + H(+)</text>
        <dbReference type="Rhea" id="RHEA:19541"/>
        <dbReference type="ChEBI" id="CHEBI:15378"/>
        <dbReference type="ChEBI" id="CHEBI:43474"/>
        <dbReference type="ChEBI" id="CHEBI:57783"/>
        <dbReference type="ChEBI" id="CHEBI:58066"/>
        <dbReference type="ChEBI" id="CHEBI:58274"/>
        <dbReference type="ChEBI" id="CHEBI:58349"/>
        <dbReference type="EC" id="1.2.1.41"/>
    </reaction>
</comment>
<comment type="pathway">
    <text evidence="1">Amino-acid biosynthesis; L-proline biosynthesis; L-glutamate 5-semialdehyde from L-glutamate: step 2/2.</text>
</comment>
<comment type="subcellular location">
    <subcellularLocation>
        <location evidence="1">Cytoplasm</location>
    </subcellularLocation>
</comment>
<comment type="similarity">
    <text evidence="1">Belongs to the gamma-glutamyl phosphate reductase family.</text>
</comment>
<reference key="1">
    <citation type="journal article" date="2006" name="J. Bacteriol.">
        <title>Comparison of the genome sequence of the poultry pathogen Bordetella avium with those of B. bronchiseptica, B. pertussis, and B. parapertussis reveals extensive diversity in surface structures associated with host interaction.</title>
        <authorList>
            <person name="Sebaihia M."/>
            <person name="Preston A."/>
            <person name="Maskell D.J."/>
            <person name="Kuzmiak H."/>
            <person name="Connell T.D."/>
            <person name="King N.D."/>
            <person name="Orndorff P.E."/>
            <person name="Miyamoto D.M."/>
            <person name="Thomson N.R."/>
            <person name="Harris D."/>
            <person name="Goble A."/>
            <person name="Lord A."/>
            <person name="Murphy L."/>
            <person name="Quail M.A."/>
            <person name="Rutter S."/>
            <person name="Squares R."/>
            <person name="Squares S."/>
            <person name="Woodward J."/>
            <person name="Parkhill J."/>
            <person name="Temple L.M."/>
        </authorList>
    </citation>
    <scope>NUCLEOTIDE SEQUENCE [LARGE SCALE GENOMIC DNA]</scope>
    <source>
        <strain>197N</strain>
    </source>
</reference>
<evidence type="ECO:0000255" key="1">
    <source>
        <dbReference type="HAMAP-Rule" id="MF_00412"/>
    </source>
</evidence>
<accession>Q2KXE0</accession>
<name>PROA_BORA1</name>
<dbReference type="EC" id="1.2.1.41" evidence="1"/>
<dbReference type="EMBL" id="AM167904">
    <property type="protein sequence ID" value="CAJ50105.1"/>
    <property type="molecule type" value="Genomic_DNA"/>
</dbReference>
<dbReference type="RefSeq" id="WP_012418152.1">
    <property type="nucleotide sequence ID" value="NC_010645.1"/>
</dbReference>
<dbReference type="SMR" id="Q2KXE0"/>
<dbReference type="STRING" id="360910.BAV2495"/>
<dbReference type="KEGG" id="bav:BAV2495"/>
<dbReference type="eggNOG" id="COG0014">
    <property type="taxonomic scope" value="Bacteria"/>
</dbReference>
<dbReference type="HOGENOM" id="CLU_030231_0_0_4"/>
<dbReference type="OrthoDB" id="9809970at2"/>
<dbReference type="UniPathway" id="UPA00098">
    <property type="reaction ID" value="UER00360"/>
</dbReference>
<dbReference type="Proteomes" id="UP000001977">
    <property type="component" value="Chromosome"/>
</dbReference>
<dbReference type="GO" id="GO:0005737">
    <property type="term" value="C:cytoplasm"/>
    <property type="evidence" value="ECO:0007669"/>
    <property type="project" value="UniProtKB-SubCell"/>
</dbReference>
<dbReference type="GO" id="GO:0004350">
    <property type="term" value="F:glutamate-5-semialdehyde dehydrogenase activity"/>
    <property type="evidence" value="ECO:0007669"/>
    <property type="project" value="UniProtKB-UniRule"/>
</dbReference>
<dbReference type="GO" id="GO:0050661">
    <property type="term" value="F:NADP binding"/>
    <property type="evidence" value="ECO:0007669"/>
    <property type="project" value="InterPro"/>
</dbReference>
<dbReference type="GO" id="GO:0055129">
    <property type="term" value="P:L-proline biosynthetic process"/>
    <property type="evidence" value="ECO:0007669"/>
    <property type="project" value="UniProtKB-UniRule"/>
</dbReference>
<dbReference type="CDD" id="cd07079">
    <property type="entry name" value="ALDH_F18-19_ProA-GPR"/>
    <property type="match status" value="1"/>
</dbReference>
<dbReference type="FunFam" id="3.40.309.10:FF:000006">
    <property type="entry name" value="Gamma-glutamyl phosphate reductase"/>
    <property type="match status" value="1"/>
</dbReference>
<dbReference type="Gene3D" id="3.40.605.10">
    <property type="entry name" value="Aldehyde Dehydrogenase, Chain A, domain 1"/>
    <property type="match status" value="1"/>
</dbReference>
<dbReference type="Gene3D" id="3.40.309.10">
    <property type="entry name" value="Aldehyde Dehydrogenase, Chain A, domain 2"/>
    <property type="match status" value="1"/>
</dbReference>
<dbReference type="HAMAP" id="MF_00412">
    <property type="entry name" value="ProA"/>
    <property type="match status" value="1"/>
</dbReference>
<dbReference type="InterPro" id="IPR016161">
    <property type="entry name" value="Ald_DH/histidinol_DH"/>
</dbReference>
<dbReference type="InterPro" id="IPR016163">
    <property type="entry name" value="Ald_DH_C"/>
</dbReference>
<dbReference type="InterPro" id="IPR016162">
    <property type="entry name" value="Ald_DH_N"/>
</dbReference>
<dbReference type="InterPro" id="IPR015590">
    <property type="entry name" value="Aldehyde_DH_dom"/>
</dbReference>
<dbReference type="InterPro" id="IPR020593">
    <property type="entry name" value="G-glutamylP_reductase_CS"/>
</dbReference>
<dbReference type="InterPro" id="IPR012134">
    <property type="entry name" value="Glu-5-SA_DH"/>
</dbReference>
<dbReference type="InterPro" id="IPR000965">
    <property type="entry name" value="GPR_dom"/>
</dbReference>
<dbReference type="NCBIfam" id="NF001221">
    <property type="entry name" value="PRK00197.1"/>
    <property type="match status" value="1"/>
</dbReference>
<dbReference type="NCBIfam" id="TIGR00407">
    <property type="entry name" value="proA"/>
    <property type="match status" value="1"/>
</dbReference>
<dbReference type="PANTHER" id="PTHR11063:SF8">
    <property type="entry name" value="DELTA-1-PYRROLINE-5-CARBOXYLATE SYNTHASE"/>
    <property type="match status" value="1"/>
</dbReference>
<dbReference type="PANTHER" id="PTHR11063">
    <property type="entry name" value="GLUTAMATE SEMIALDEHYDE DEHYDROGENASE"/>
    <property type="match status" value="1"/>
</dbReference>
<dbReference type="Pfam" id="PF00171">
    <property type="entry name" value="Aldedh"/>
    <property type="match status" value="2"/>
</dbReference>
<dbReference type="PIRSF" id="PIRSF000151">
    <property type="entry name" value="GPR"/>
    <property type="match status" value="1"/>
</dbReference>
<dbReference type="SUPFAM" id="SSF53720">
    <property type="entry name" value="ALDH-like"/>
    <property type="match status" value="1"/>
</dbReference>
<dbReference type="PROSITE" id="PS01223">
    <property type="entry name" value="PROA"/>
    <property type="match status" value="1"/>
</dbReference>
<organism>
    <name type="scientific">Bordetella avium (strain 197N)</name>
    <dbReference type="NCBI Taxonomy" id="360910"/>
    <lineage>
        <taxon>Bacteria</taxon>
        <taxon>Pseudomonadati</taxon>
        <taxon>Pseudomonadota</taxon>
        <taxon>Betaproteobacteria</taxon>
        <taxon>Burkholderiales</taxon>
        <taxon>Alcaligenaceae</taxon>
        <taxon>Bordetella</taxon>
    </lineage>
</organism>
<sequence length="419" mass="44373">MSSIEQIMLTLGENARQASRAMMRASGTAKNRALLAMAELIIDGKAALQAANALDLEAARANGLEPALLDRLTLSDRSVQLMAEGLRQIAALPDPVGSLGPTQVRPNGMRVAQMRVPLGVIGIIYESRPNVTIDAAALCLKSGNATILRGGSEALHSNLALGAIVQAGLAAAELPPAAVQVVSTTDRAAVGKLVTMTEHIDVIVPRGGKGLIARLAQEARVPLIKHLDGNCHVYIDAAADPDRALEIAFNAKTYRYGVCGSMETLLVHRAIAPTQLPRIARALIEHGVELRGCERSQAIVPGMAAASEEDWGTEYLGPVLAVRVVDDLDQAMEHIARWGSGHTDAIVTENLAAAQRFQREVDSSSVYVNLPTVFADGFEYGLGAEIGISTNRLHARGPVGLEGLTTYKWVLTGEGQTRG</sequence>
<keyword id="KW-0028">Amino-acid biosynthesis</keyword>
<keyword id="KW-0963">Cytoplasm</keyword>
<keyword id="KW-0521">NADP</keyword>
<keyword id="KW-0560">Oxidoreductase</keyword>
<keyword id="KW-0641">Proline biosynthesis</keyword>
<keyword id="KW-1185">Reference proteome</keyword>